<gene>
    <name evidence="1" type="primary">smrB</name>
    <name type="ordered locus">PM0391</name>
</gene>
<dbReference type="EC" id="3.1.-.-" evidence="1"/>
<dbReference type="EMBL" id="AE004439">
    <property type="protein sequence ID" value="AAK02475.1"/>
    <property type="molecule type" value="Genomic_DNA"/>
</dbReference>
<dbReference type="RefSeq" id="WP_005721623.1">
    <property type="nucleotide sequence ID" value="NC_002663.1"/>
</dbReference>
<dbReference type="SMR" id="Q9CNN6"/>
<dbReference type="STRING" id="272843.PM0391"/>
<dbReference type="EnsemblBacteria" id="AAK02475">
    <property type="protein sequence ID" value="AAK02475"/>
    <property type="gene ID" value="PM0391"/>
</dbReference>
<dbReference type="GeneID" id="77206122"/>
<dbReference type="KEGG" id="pmu:PM0391"/>
<dbReference type="HOGENOM" id="CLU_055978_4_0_6"/>
<dbReference type="OrthoDB" id="5795446at2"/>
<dbReference type="Proteomes" id="UP000000809">
    <property type="component" value="Chromosome"/>
</dbReference>
<dbReference type="GO" id="GO:0004521">
    <property type="term" value="F:RNA endonuclease activity"/>
    <property type="evidence" value="ECO:0007669"/>
    <property type="project" value="UniProtKB-UniRule"/>
</dbReference>
<dbReference type="GO" id="GO:0019843">
    <property type="term" value="F:rRNA binding"/>
    <property type="evidence" value="ECO:0007669"/>
    <property type="project" value="UniProtKB-UniRule"/>
</dbReference>
<dbReference type="GO" id="GO:0072344">
    <property type="term" value="P:rescue of stalled ribosome"/>
    <property type="evidence" value="ECO:0007669"/>
    <property type="project" value="UniProtKB-UniRule"/>
</dbReference>
<dbReference type="Gene3D" id="3.30.1370.110">
    <property type="match status" value="1"/>
</dbReference>
<dbReference type="HAMAP" id="MF_01042">
    <property type="entry name" value="SmrB"/>
    <property type="match status" value="1"/>
</dbReference>
<dbReference type="InterPro" id="IPR002625">
    <property type="entry name" value="Smr_dom"/>
</dbReference>
<dbReference type="InterPro" id="IPR036063">
    <property type="entry name" value="Smr_dom_sf"/>
</dbReference>
<dbReference type="InterPro" id="IPR022990">
    <property type="entry name" value="SmrB-like"/>
</dbReference>
<dbReference type="NCBIfam" id="NF003432">
    <property type="entry name" value="PRK04946.1"/>
    <property type="match status" value="1"/>
</dbReference>
<dbReference type="PANTHER" id="PTHR35562">
    <property type="entry name" value="DNA ENDONUCLEASE SMRA-RELATED"/>
    <property type="match status" value="1"/>
</dbReference>
<dbReference type="PANTHER" id="PTHR35562:SF1">
    <property type="entry name" value="UPF0115 PROTEIN YFCN"/>
    <property type="match status" value="1"/>
</dbReference>
<dbReference type="Pfam" id="PF01713">
    <property type="entry name" value="Smr"/>
    <property type="match status" value="1"/>
</dbReference>
<dbReference type="SMART" id="SM00463">
    <property type="entry name" value="SMR"/>
    <property type="match status" value="1"/>
</dbReference>
<dbReference type="SUPFAM" id="SSF160443">
    <property type="entry name" value="SMR domain-like"/>
    <property type="match status" value="1"/>
</dbReference>
<dbReference type="PROSITE" id="PS50828">
    <property type="entry name" value="SMR"/>
    <property type="match status" value="1"/>
</dbReference>
<organism>
    <name type="scientific">Pasteurella multocida (strain Pm70)</name>
    <dbReference type="NCBI Taxonomy" id="272843"/>
    <lineage>
        <taxon>Bacteria</taxon>
        <taxon>Pseudomonadati</taxon>
        <taxon>Pseudomonadota</taxon>
        <taxon>Gammaproteobacteria</taxon>
        <taxon>Pasteurellales</taxon>
        <taxon>Pasteurellaceae</taxon>
        <taxon>Pasteurella</taxon>
    </lineage>
</organism>
<proteinExistence type="inferred from homology"/>
<comment type="function">
    <text evidence="1">Acts as a ribosome collision sensor. Detects stalled/collided disomes (pairs of ribosomes where the leading ribosome is stalled and a second ribosome has collided with it) and endonucleolytically cleaves mRNA at the 5' boundary of the stalled ribosome. Stalled/collided disomes form a new interface (primarily via the 30S subunits) that binds SmrB. Cleaved mRNA becomes available for tmRNA ligation, leading to ribosomal subunit dissociation and rescue of stalled ribosomes.</text>
</comment>
<comment type="subunit">
    <text evidence="1">Associates with collided ribosomes, but not with correctly translating polysomes.</text>
</comment>
<comment type="similarity">
    <text evidence="1">Belongs to the SmrB family.</text>
</comment>
<reference key="1">
    <citation type="journal article" date="2001" name="Proc. Natl. Acad. Sci. U.S.A.">
        <title>Complete genomic sequence of Pasteurella multocida Pm70.</title>
        <authorList>
            <person name="May B.J."/>
            <person name="Zhang Q."/>
            <person name="Li L.L."/>
            <person name="Paustian M.L."/>
            <person name="Whittam T.S."/>
            <person name="Kapur V."/>
        </authorList>
    </citation>
    <scope>NUCLEOTIDE SEQUENCE [LARGE SCALE GENOMIC DNA]</scope>
    <source>
        <strain>Pm70</strain>
    </source>
</reference>
<accession>Q9CNN6</accession>
<sequence>MLEPDDIALFRGAVKGVKALKQDKFIAPRQKMSKKKSTLRDIREKEDTLFYFSDEYEPLLNEESAVRYLREGEDSHILKQLRRGDFSPELFLDLHGLTKEQAKIELASLLQACENEHVYCASVMTGYGSYILKRQIPRWLVQHPKVRALHQAPKAWGGDAAILILFEV</sequence>
<feature type="chain" id="PRO_0000214556" description="Ribosome rescue factor SmrB">
    <location>
        <begin position="1"/>
        <end position="168"/>
    </location>
</feature>
<feature type="domain" description="Smr" evidence="1">
    <location>
        <begin position="92"/>
        <end position="167"/>
    </location>
</feature>
<keyword id="KW-0255">Endonuclease</keyword>
<keyword id="KW-0378">Hydrolase</keyword>
<keyword id="KW-0540">Nuclease</keyword>
<keyword id="KW-1185">Reference proteome</keyword>
<keyword id="KW-0694">RNA-binding</keyword>
<keyword id="KW-0699">rRNA-binding</keyword>
<evidence type="ECO:0000255" key="1">
    <source>
        <dbReference type="HAMAP-Rule" id="MF_01042"/>
    </source>
</evidence>
<protein>
    <recommendedName>
        <fullName evidence="1">Ribosome rescue factor SmrB</fullName>
        <ecNumber evidence="1">3.1.-.-</ecNumber>
    </recommendedName>
</protein>
<name>SMRB_PASMU</name>